<dbReference type="EC" id="2.8.3.-" evidence="5 6 7"/>
<dbReference type="EC" id="2.8.3.13" evidence="13"/>
<dbReference type="EMBL" id="AK021870">
    <property type="protein sequence ID" value="BAB13922.1"/>
    <property type="status" value="ALT_INIT"/>
    <property type="molecule type" value="mRNA"/>
</dbReference>
<dbReference type="EMBL" id="AK299133">
    <property type="protein sequence ID" value="BAG61185.1"/>
    <property type="status" value="ALT_INIT"/>
    <property type="molecule type" value="mRNA"/>
</dbReference>
<dbReference type="EMBL" id="AK296048">
    <property type="protein sequence ID" value="BAG58812.1"/>
    <property type="molecule type" value="mRNA"/>
</dbReference>
<dbReference type="EMBL" id="AC004988">
    <property type="status" value="NOT_ANNOTATED_CDS"/>
    <property type="molecule type" value="Genomic_DNA"/>
</dbReference>
<dbReference type="EMBL" id="AC005030">
    <property type="status" value="NOT_ANNOTATED_CDS"/>
    <property type="molecule type" value="Genomic_DNA"/>
</dbReference>
<dbReference type="EMBL" id="AC005160">
    <property type="status" value="NOT_ANNOTATED_CDS"/>
    <property type="molecule type" value="Genomic_DNA"/>
</dbReference>
<dbReference type="EMBL" id="AC006023">
    <property type="status" value="NOT_ANNOTATED_CDS"/>
    <property type="molecule type" value="Genomic_DNA"/>
</dbReference>
<dbReference type="EMBL" id="AC025536">
    <property type="status" value="NOT_ANNOTATED_CDS"/>
    <property type="molecule type" value="Genomic_DNA"/>
</dbReference>
<dbReference type="EMBL" id="AC026866">
    <property type="status" value="NOT_ANNOTATED_CDS"/>
    <property type="molecule type" value="Genomic_DNA"/>
</dbReference>
<dbReference type="EMBL" id="AC079149">
    <property type="status" value="NOT_ANNOTATED_CDS"/>
    <property type="molecule type" value="Genomic_DNA"/>
</dbReference>
<dbReference type="EMBL" id="AC092030">
    <property type="status" value="NOT_ANNOTATED_CDS"/>
    <property type="molecule type" value="Genomic_DNA"/>
</dbReference>
<dbReference type="EMBL" id="CH236951">
    <property type="protein sequence ID" value="EAL24000.1"/>
    <property type="molecule type" value="Genomic_DNA"/>
</dbReference>
<dbReference type="EMBL" id="CH471073">
    <property type="protein sequence ID" value="EAW94136.1"/>
    <property type="molecule type" value="Genomic_DNA"/>
</dbReference>
<dbReference type="EMBL" id="AF397013">
    <property type="protein sequence ID" value="AAL76418.1"/>
    <property type="molecule type" value="mRNA"/>
</dbReference>
<dbReference type="EMBL" id="AB014767">
    <property type="protein sequence ID" value="BAB87807.1"/>
    <property type="molecule type" value="mRNA"/>
</dbReference>
<dbReference type="EMBL" id="BC098117">
    <property type="protein sequence ID" value="AAH98117.1"/>
    <property type="status" value="ALT_INIT"/>
    <property type="molecule type" value="mRNA"/>
</dbReference>
<dbReference type="EMBL" id="BC098261">
    <property type="protein sequence ID" value="AAH98261.1"/>
    <property type="status" value="ALT_INIT"/>
    <property type="molecule type" value="mRNA"/>
</dbReference>
<dbReference type="EMBL" id="BC098310">
    <property type="protein sequence ID" value="AAH98310.1"/>
    <property type="status" value="ALT_INIT"/>
    <property type="molecule type" value="mRNA"/>
</dbReference>
<dbReference type="EMBL" id="BC098318">
    <property type="protein sequence ID" value="AAH98318.1"/>
    <property type="status" value="ALT_INIT"/>
    <property type="molecule type" value="mRNA"/>
</dbReference>
<dbReference type="CCDS" id="CCDS55104.2">
    <molecule id="Q9HAC7-3"/>
</dbReference>
<dbReference type="CCDS" id="CCDS55105.2">
    <molecule id="Q9HAC7-1"/>
</dbReference>
<dbReference type="CCDS" id="CCDS55106.2">
    <molecule id="Q9HAC7-4"/>
</dbReference>
<dbReference type="RefSeq" id="NP_001180240.2">
    <molecule id="Q9HAC7-3"/>
    <property type="nucleotide sequence ID" value="NM_001193311.2"/>
</dbReference>
<dbReference type="RefSeq" id="NP_001180241.2">
    <molecule id="Q9HAC7-4"/>
    <property type="nucleotide sequence ID" value="NM_001193312.2"/>
</dbReference>
<dbReference type="RefSeq" id="NP_001180242.2">
    <molecule id="Q9HAC7-1"/>
    <property type="nucleotide sequence ID" value="NM_001193313.2"/>
</dbReference>
<dbReference type="RefSeq" id="NP_079004.2">
    <molecule id="Q9HAC7-2"/>
    <property type="nucleotide sequence ID" value="NM_024728.3"/>
</dbReference>
<dbReference type="PDB" id="9BR6">
    <property type="method" value="X-ray"/>
    <property type="resolution" value="2.40 A"/>
    <property type="chains" value="A/B=31-438"/>
</dbReference>
<dbReference type="PDB" id="9BR7">
    <property type="method" value="X-ray"/>
    <property type="resolution" value="2.08 A"/>
    <property type="chains" value="A/B/C/D=31-438"/>
</dbReference>
<dbReference type="PDBsum" id="9BR6"/>
<dbReference type="PDBsum" id="9BR7"/>
<dbReference type="SMR" id="Q9HAC7"/>
<dbReference type="BioGRID" id="122883">
    <property type="interactions" value="23"/>
</dbReference>
<dbReference type="FunCoup" id="Q9HAC7">
    <property type="interactions" value="484"/>
</dbReference>
<dbReference type="IntAct" id="Q9HAC7">
    <property type="interactions" value="34"/>
</dbReference>
<dbReference type="STRING" id="9606.ENSP00000486291"/>
<dbReference type="GlyGen" id="Q9HAC7">
    <property type="glycosylation" value="1 site, 1 O-linked glycan (1 site)"/>
</dbReference>
<dbReference type="PhosphoSitePlus" id="Q9HAC7"/>
<dbReference type="BioMuta" id="SUGCT"/>
<dbReference type="DMDM" id="71152390"/>
<dbReference type="jPOST" id="Q9HAC7"/>
<dbReference type="MassIVE" id="Q9HAC7"/>
<dbReference type="PaxDb" id="9606-ENSP00000338475"/>
<dbReference type="PeptideAtlas" id="Q9HAC7"/>
<dbReference type="ProteomicsDB" id="81391">
    <molecule id="Q9HAC7-1"/>
</dbReference>
<dbReference type="ProteomicsDB" id="81392">
    <molecule id="Q9HAC7-2"/>
</dbReference>
<dbReference type="ProteomicsDB" id="81393">
    <molecule id="Q9HAC7-3"/>
</dbReference>
<dbReference type="ProteomicsDB" id="81394">
    <molecule id="Q9HAC7-4"/>
</dbReference>
<dbReference type="Pumba" id="Q9HAC7"/>
<dbReference type="Antibodypedia" id="49926">
    <property type="antibodies" value="127 antibodies from 19 providers"/>
</dbReference>
<dbReference type="DNASU" id="79783"/>
<dbReference type="Ensembl" id="ENST00000335693.9">
    <molecule id="Q9HAC7-1"/>
    <property type="protein sequence ID" value="ENSP00000338475.5"/>
    <property type="gene ID" value="ENSG00000175600.16"/>
</dbReference>
<dbReference type="Ensembl" id="ENST00000401647.7">
    <molecule id="Q9HAC7-4"/>
    <property type="protein sequence ID" value="ENSP00000385222.3"/>
    <property type="gene ID" value="ENSG00000175600.16"/>
</dbReference>
<dbReference type="Ensembl" id="ENST00000628514.3">
    <molecule id="Q9HAC7-3"/>
    <property type="protein sequence ID" value="ENSP00000486291.2"/>
    <property type="gene ID" value="ENSG00000175600.16"/>
</dbReference>
<dbReference type="GeneID" id="79783"/>
<dbReference type="KEGG" id="hsa:79783"/>
<dbReference type="MANE-Select" id="ENST00000335693.9">
    <property type="protein sequence ID" value="ENSP00000338475.5"/>
    <property type="RefSeq nucleotide sequence ID" value="NM_001193313.2"/>
    <property type="RefSeq protein sequence ID" value="NP_001180242.2"/>
</dbReference>
<dbReference type="UCSC" id="uc003thn.3">
    <molecule id="Q9HAC7-1"/>
    <property type="organism name" value="human"/>
</dbReference>
<dbReference type="AGR" id="HGNC:16001"/>
<dbReference type="CTD" id="79783"/>
<dbReference type="DisGeNET" id="79783"/>
<dbReference type="GeneCards" id="SUGCT"/>
<dbReference type="HGNC" id="HGNC:16001">
    <property type="gene designation" value="SUGCT"/>
</dbReference>
<dbReference type="HPA" id="ENSG00000175600">
    <property type="expression patterns" value="Tissue enhanced (kidney, liver)"/>
</dbReference>
<dbReference type="MalaCards" id="SUGCT"/>
<dbReference type="MIM" id="231690">
    <property type="type" value="phenotype"/>
</dbReference>
<dbReference type="MIM" id="609187">
    <property type="type" value="gene"/>
</dbReference>
<dbReference type="neXtProt" id="NX_Q9HAC7"/>
<dbReference type="OpenTargets" id="ENSG00000175600"/>
<dbReference type="Orphanet" id="35706">
    <property type="disease" value="Glutaric acidemia type 3"/>
</dbReference>
<dbReference type="PharmGKB" id="PA25942"/>
<dbReference type="VEuPathDB" id="HostDB:ENSG00000175600"/>
<dbReference type="eggNOG" id="KOG3957">
    <property type="taxonomic scope" value="Eukaryota"/>
</dbReference>
<dbReference type="GeneTree" id="ENSGT00940000157866"/>
<dbReference type="HOGENOM" id="CLU_033975_0_2_1"/>
<dbReference type="InParanoid" id="Q9HAC7"/>
<dbReference type="OMA" id="RVAMYDV"/>
<dbReference type="OrthoDB" id="5863171at2759"/>
<dbReference type="PAN-GO" id="Q9HAC7">
    <property type="GO annotations" value="2 GO annotations based on evolutionary models"/>
</dbReference>
<dbReference type="PhylomeDB" id="Q9HAC7"/>
<dbReference type="TreeFam" id="TF314188"/>
<dbReference type="BioCyc" id="MetaCyc:ENSG00000175600-MONOMER"/>
<dbReference type="BRENDA" id="2.8.3.13">
    <property type="organism ID" value="2681"/>
</dbReference>
<dbReference type="PathwayCommons" id="Q9HAC7"/>
<dbReference type="SignaLink" id="Q9HAC7"/>
<dbReference type="BioGRID-ORCS" id="79783">
    <property type="hits" value="11 hits in 1143 CRISPR screens"/>
</dbReference>
<dbReference type="ChiTaRS" id="SUGCT">
    <property type="organism name" value="human"/>
</dbReference>
<dbReference type="GenomeRNAi" id="79783"/>
<dbReference type="Pharos" id="Q9HAC7">
    <property type="development level" value="Tbio"/>
</dbReference>
<dbReference type="PRO" id="PR:Q9HAC7"/>
<dbReference type="Proteomes" id="UP000005640">
    <property type="component" value="Chromosome 7"/>
</dbReference>
<dbReference type="RNAct" id="Q9HAC7">
    <property type="molecule type" value="protein"/>
</dbReference>
<dbReference type="Bgee" id="ENSG00000175600">
    <property type="expression patterns" value="Expressed in right adrenal gland cortex and 122 other cell types or tissues"/>
</dbReference>
<dbReference type="ExpressionAtlas" id="Q9HAC7">
    <property type="expression patterns" value="baseline and differential"/>
</dbReference>
<dbReference type="GO" id="GO:0005739">
    <property type="term" value="C:mitochondrion"/>
    <property type="evidence" value="ECO:0000314"/>
    <property type="project" value="UniProtKB"/>
</dbReference>
<dbReference type="GO" id="GO:0047369">
    <property type="term" value="F:succinate-hydroxymethylglutarate CoA-transferase activity"/>
    <property type="evidence" value="ECO:0000314"/>
    <property type="project" value="UniProtKB"/>
</dbReference>
<dbReference type="FunFam" id="3.40.50.10540:FF:000005">
    <property type="entry name" value="succinate--hydroxymethylglutarate CoA-transferase isoform X1"/>
    <property type="match status" value="1"/>
</dbReference>
<dbReference type="FunFam" id="3.30.1540.10:FF:000005">
    <property type="entry name" value="succinate--hydroxymethylglutarate CoA-transferase isoform X4"/>
    <property type="match status" value="1"/>
</dbReference>
<dbReference type="Gene3D" id="3.40.50.10540">
    <property type="entry name" value="Crotonobetainyl-coa:carnitine coa-transferase, domain 1"/>
    <property type="match status" value="1"/>
</dbReference>
<dbReference type="Gene3D" id="3.30.1540.10">
    <property type="entry name" value="formyl-coa transferase, domain 3"/>
    <property type="match status" value="1"/>
</dbReference>
<dbReference type="InterPro" id="IPR050483">
    <property type="entry name" value="CoA-transferase_III_domain"/>
</dbReference>
<dbReference type="InterPro" id="IPR003673">
    <property type="entry name" value="CoA-Trfase_fam_III"/>
</dbReference>
<dbReference type="InterPro" id="IPR044855">
    <property type="entry name" value="CoA-Trfase_III_dom3_sf"/>
</dbReference>
<dbReference type="InterPro" id="IPR023606">
    <property type="entry name" value="CoA-Trfase_III_dom_1_sf"/>
</dbReference>
<dbReference type="PANTHER" id="PTHR48207">
    <property type="entry name" value="SUCCINATE--HYDROXYMETHYLGLUTARATE COA-TRANSFERASE"/>
    <property type="match status" value="1"/>
</dbReference>
<dbReference type="PANTHER" id="PTHR48207:SF3">
    <property type="entry name" value="SUCCINATE--HYDROXYMETHYLGLUTARATE COA-TRANSFERASE"/>
    <property type="match status" value="1"/>
</dbReference>
<dbReference type="Pfam" id="PF02515">
    <property type="entry name" value="CoA_transf_3"/>
    <property type="match status" value="1"/>
</dbReference>
<dbReference type="SUPFAM" id="SSF89796">
    <property type="entry name" value="CoA-transferase family III (CaiB/BaiF)"/>
    <property type="match status" value="1"/>
</dbReference>
<keyword id="KW-0002">3D-structure</keyword>
<keyword id="KW-0007">Acetylation</keyword>
<keyword id="KW-0025">Alternative splicing</keyword>
<keyword id="KW-0225">Disease variant</keyword>
<keyword id="KW-0316">Glutaricaciduria</keyword>
<keyword id="KW-0496">Mitochondrion</keyword>
<keyword id="KW-1267">Proteomics identification</keyword>
<keyword id="KW-1185">Reference proteome</keyword>
<keyword id="KW-0808">Transferase</keyword>
<keyword id="KW-0809">Transit peptide</keyword>
<feature type="transit peptide" description="Mitochondrion" evidence="2">
    <location>
        <begin position="1"/>
        <end position="31"/>
    </location>
</feature>
<feature type="chain" id="PRO_0000194726" description="Succinyl-CoA:glutarate CoA-transferase">
    <location>
        <begin position="32"/>
        <end position="438"/>
    </location>
</feature>
<feature type="active site" description="Nucleophile" evidence="12">
    <location>
        <position position="205"/>
    </location>
</feature>
<feature type="modified residue" description="N6-acetyllysine" evidence="1">
    <location>
        <position position="394"/>
    </location>
</feature>
<feature type="splice variant" id="VSP_014721" description="In isoform 2." evidence="8">
    <location>
        <begin position="119"/>
        <end position="155"/>
    </location>
</feature>
<feature type="splice variant" id="VSP_043291" description="In isoform 4." evidence="9">
    <location>
        <begin position="193"/>
        <end position="240"/>
    </location>
</feature>
<feature type="splice variant" id="VSP_014722" description="In isoform 2 and isoform 3." evidence="8 9">
    <original>Q</original>
    <variation>QNAVSGFQSLLHSLAHGPFLHLQGSAR</variation>
    <location>
        <position position="363"/>
    </location>
</feature>
<feature type="sequence variant" id="VAR_090006" description="In GA3; dbSNP:rs137852862." evidence="4">
    <location>
        <begin position="101"/>
        <end position="438"/>
    </location>
</feature>
<feature type="sequence variant" id="VAR_090007" description="In GA3; dbSNP:rs137852861." evidence="4">
    <location>
        <begin position="172"/>
        <end position="438"/>
    </location>
</feature>
<feature type="sequence variant" id="VAR_054852" description="In GA3; severely decreased protein stability and processing; dbSNP:rs137852860." evidence="4 5">
    <original>R</original>
    <variation>W</variation>
    <location>
        <position position="329"/>
    </location>
</feature>
<feature type="mutagenesis site" description="Loss of CoA transferase activity toward glutaryl-CoA and 3-hydroxy-3-methylglutarate substrates." evidence="7">
    <original>D</original>
    <variation>A</variation>
    <location>
        <position position="205"/>
    </location>
</feature>
<feature type="sequence conflict" description="In Ref. 7; BAB87807." evidence="12" ref="7">
    <original>E</original>
    <variation>G</variation>
    <location>
        <position position="92"/>
    </location>
</feature>
<feature type="turn" evidence="16">
    <location>
        <begin position="40"/>
        <end position="43"/>
    </location>
</feature>
<feature type="strand" evidence="16">
    <location>
        <begin position="45"/>
        <end position="48"/>
    </location>
</feature>
<feature type="helix" evidence="16">
    <location>
        <begin position="54"/>
        <end position="64"/>
    </location>
</feature>
<feature type="strand" evidence="16">
    <location>
        <begin position="68"/>
        <end position="73"/>
    </location>
</feature>
<feature type="turn" evidence="16">
    <location>
        <begin position="75"/>
        <end position="77"/>
    </location>
</feature>
<feature type="helix" evidence="16">
    <location>
        <begin position="80"/>
        <end position="83"/>
    </location>
</feature>
<feature type="strand" evidence="16">
    <location>
        <begin position="86"/>
        <end position="89"/>
    </location>
</feature>
<feature type="helix" evidence="16">
    <location>
        <begin position="94"/>
        <end position="99"/>
    </location>
</feature>
<feature type="strand" evidence="16">
    <location>
        <begin position="104"/>
        <end position="108"/>
    </location>
</feature>
<feature type="strand" evidence="16">
    <location>
        <begin position="110"/>
        <end position="112"/>
    </location>
</feature>
<feature type="helix" evidence="16">
    <location>
        <begin position="113"/>
        <end position="125"/>
    </location>
</feature>
<feature type="strand" evidence="16">
    <location>
        <begin position="127"/>
        <end position="131"/>
    </location>
</feature>
<feature type="helix" evidence="16">
    <location>
        <begin position="137"/>
        <end position="140"/>
    </location>
</feature>
<feature type="helix" evidence="16">
    <location>
        <begin position="145"/>
        <end position="151"/>
    </location>
</feature>
<feature type="strand" evidence="16">
    <location>
        <begin position="156"/>
        <end position="163"/>
    </location>
</feature>
<feature type="strand" evidence="16">
    <location>
        <begin position="165"/>
        <end position="167"/>
    </location>
</feature>
<feature type="turn" evidence="16">
    <location>
        <begin position="168"/>
        <end position="171"/>
    </location>
</feature>
<feature type="helix" evidence="16">
    <location>
        <begin position="176"/>
        <end position="182"/>
    </location>
</feature>
<feature type="turn" evidence="16">
    <location>
        <begin position="183"/>
        <end position="188"/>
    </location>
</feature>
<feature type="helix" evidence="16">
    <location>
        <begin position="203"/>
        <end position="226"/>
    </location>
</feature>
<feature type="strand" evidence="16">
    <location>
        <begin position="231"/>
        <end position="235"/>
    </location>
</feature>
<feature type="helix" evidence="16">
    <location>
        <begin position="236"/>
        <end position="254"/>
    </location>
</feature>
<feature type="strand" evidence="16">
    <location>
        <begin position="269"/>
        <end position="275"/>
    </location>
</feature>
<feature type="strand" evidence="16">
    <location>
        <begin position="277"/>
        <end position="284"/>
    </location>
</feature>
<feature type="helix" evidence="16">
    <location>
        <begin position="288"/>
        <end position="297"/>
    </location>
</feature>
<feature type="helix" evidence="16">
    <location>
        <begin position="302"/>
        <end position="305"/>
    </location>
</feature>
<feature type="helix" evidence="16">
    <location>
        <begin position="307"/>
        <end position="309"/>
    </location>
</feature>
<feature type="helix" evidence="16">
    <location>
        <begin position="312"/>
        <end position="317"/>
    </location>
</feature>
<feature type="helix" evidence="16">
    <location>
        <begin position="319"/>
        <end position="331"/>
    </location>
</feature>
<feature type="helix" evidence="16">
    <location>
        <begin position="335"/>
        <end position="341"/>
    </location>
</feature>
<feature type="turn" evidence="16">
    <location>
        <begin position="342"/>
        <end position="344"/>
    </location>
</feature>
<feature type="strand" evidence="16">
    <location>
        <begin position="349"/>
        <end position="351"/>
    </location>
</feature>
<feature type="helix" evidence="16">
    <location>
        <begin position="355"/>
        <end position="360"/>
    </location>
</feature>
<feature type="helix" evidence="16">
    <location>
        <begin position="362"/>
        <end position="366"/>
    </location>
</feature>
<feature type="strand" evidence="16">
    <location>
        <begin position="370"/>
        <end position="375"/>
    </location>
</feature>
<feature type="turn" evidence="16">
    <location>
        <begin position="376"/>
        <end position="378"/>
    </location>
</feature>
<feature type="strand" evidence="16">
    <location>
        <begin position="379"/>
        <end position="384"/>
    </location>
</feature>
<feature type="strand" evidence="16">
    <location>
        <begin position="389"/>
        <end position="392"/>
    </location>
</feature>
<feature type="turn" evidence="16">
    <location>
        <begin position="404"/>
        <end position="407"/>
    </location>
</feature>
<feature type="helix" evidence="16">
    <location>
        <begin position="408"/>
        <end position="414"/>
    </location>
</feature>
<feature type="helix" evidence="16">
    <location>
        <begin position="420"/>
        <end position="429"/>
    </location>
</feature>
<feature type="strand" evidence="16">
    <location>
        <begin position="431"/>
        <end position="433"/>
    </location>
</feature>
<protein>
    <recommendedName>
        <fullName evidence="11">Succinyl-CoA:glutarate CoA-transferase</fullName>
        <ecNumber evidence="5 6 7">2.8.3.-</ecNumber>
    </recommendedName>
    <alternativeName>
        <fullName>Dermal papilla-derived protein 13</fullName>
    </alternativeName>
    <alternativeName>
        <fullName evidence="11">Dicarboxyl-CoA:dicarboxylic acid coenzyme A transferase SUGCT</fullName>
    </alternativeName>
    <alternativeName>
        <fullName evidence="10">Succinate--hydroxymethylglutarate CoA-transferase</fullName>
        <ecNumber evidence="13">2.8.3.13</ecNumber>
    </alternativeName>
</protein>
<gene>
    <name evidence="11 15" type="primary">SUGCT</name>
    <name type="synonym">C7orf10</name>
    <name type="synonym">DERP13</name>
</gene>
<comment type="function">
    <text evidence="4 5 6 7">Coenzyme A (CoA) transferase that reversibly catalyzes the transfer of a CoA moiety from a dicarboxyl-CoA to a dicarboxylate in a metabolite recycling process. Displays preference for succinyl-CoA and glutarate-CoA as dicarboxyl-CoA donors and glutarate, succinate, adipate/hexanedioate, itaconate and 3-hydroxy-3-methylglutarate as dicarboxylate acceptors (PubMed:23893049, PubMed:34492704, PubMed:38915184). Acts on intermediates or end products of lysine and tryptophan degradation pathway, in particular catalyzes succinyl-CoA-dependent reesterification of free glutarate into glutaryl-CoA to prevent renal excretion of glutarate (PubMed:18926513, PubMed:23893049, PubMed:38915184). Upon inflammation, may convert macrophage-derived itaconate to itaconyl-CoA in erythroid precursors where it negatively regulates the TCA cycle and heme synthesis to limit erythroid differentiation in the context of stress erythropoiesis (PubMed:34492704).</text>
</comment>
<comment type="catalytic activity">
    <reaction evidence="5">
        <text>glutarate + succinyl-CoA = glutaryl-CoA + succinate</text>
        <dbReference type="Rhea" id="RHEA:67900"/>
        <dbReference type="ChEBI" id="CHEBI:30031"/>
        <dbReference type="ChEBI" id="CHEBI:30921"/>
        <dbReference type="ChEBI" id="CHEBI:57292"/>
        <dbReference type="ChEBI" id="CHEBI:57378"/>
    </reaction>
    <physiologicalReaction direction="left-to-right" evidence="13">
        <dbReference type="Rhea" id="RHEA:67901"/>
    </physiologicalReaction>
    <physiologicalReaction direction="right-to-left" evidence="13">
        <dbReference type="Rhea" id="RHEA:67902"/>
    </physiologicalReaction>
</comment>
<comment type="catalytic activity">
    <reaction evidence="13">
        <text>3-hydroxy-3-methylglutarate + succinyl-CoA = (3S)-3-hydroxy-3-methylglutaryl-CoA + succinate</text>
        <dbReference type="Rhea" id="RHEA:12284"/>
        <dbReference type="ChEBI" id="CHEBI:17325"/>
        <dbReference type="ChEBI" id="CHEBI:30031"/>
        <dbReference type="ChEBI" id="CHEBI:43074"/>
        <dbReference type="ChEBI" id="CHEBI:57292"/>
        <dbReference type="EC" id="2.8.3.13"/>
    </reaction>
    <physiologicalReaction direction="left-to-right" evidence="13">
        <dbReference type="Rhea" id="RHEA:12285"/>
    </physiologicalReaction>
    <physiologicalReaction direction="right-to-left" evidence="13">
        <dbReference type="Rhea" id="RHEA:12286"/>
    </physiologicalReaction>
</comment>
<comment type="catalytic activity">
    <reaction evidence="5 7">
        <text>3-hydroxy-3-methylglutarate + glutaryl-CoA = (3S)-3-hydroxy-3-methylglutaryl-CoA + glutarate</text>
        <dbReference type="Rhea" id="RHEA:81723"/>
        <dbReference type="ChEBI" id="CHEBI:17325"/>
        <dbReference type="ChEBI" id="CHEBI:30921"/>
        <dbReference type="ChEBI" id="CHEBI:43074"/>
        <dbReference type="ChEBI" id="CHEBI:57378"/>
    </reaction>
    <physiologicalReaction direction="left-to-right" evidence="13">
        <dbReference type="Rhea" id="RHEA:81724"/>
    </physiologicalReaction>
    <physiologicalReaction direction="right-to-left" evidence="13">
        <dbReference type="Rhea" id="RHEA:81725"/>
    </physiologicalReaction>
</comment>
<comment type="catalytic activity">
    <reaction evidence="5">
        <text>hexanedioate + glutaryl-CoA = hexanedioyl-CoA + glutarate</text>
        <dbReference type="Rhea" id="RHEA:81711"/>
        <dbReference type="ChEBI" id="CHEBI:17128"/>
        <dbReference type="ChEBI" id="CHEBI:30921"/>
        <dbReference type="ChEBI" id="CHEBI:57378"/>
        <dbReference type="ChEBI" id="CHEBI:76327"/>
    </reaction>
    <physiologicalReaction direction="left-to-right" evidence="13">
        <dbReference type="Rhea" id="RHEA:81712"/>
    </physiologicalReaction>
    <physiologicalReaction direction="right-to-left" evidence="13">
        <dbReference type="Rhea" id="RHEA:81713"/>
    </physiologicalReaction>
</comment>
<comment type="catalytic activity">
    <reaction evidence="5">
        <text>itaconate + glutaryl-CoA = itaconyl-CoA + glutarate</text>
        <dbReference type="Rhea" id="RHEA:81715"/>
        <dbReference type="ChEBI" id="CHEBI:17240"/>
        <dbReference type="ChEBI" id="CHEBI:30921"/>
        <dbReference type="ChEBI" id="CHEBI:57378"/>
        <dbReference type="ChEBI" id="CHEBI:57381"/>
    </reaction>
    <physiologicalReaction direction="left-to-right" evidence="13">
        <dbReference type="Rhea" id="RHEA:81716"/>
    </physiologicalReaction>
    <physiologicalReaction direction="right-to-left" evidence="13">
        <dbReference type="Rhea" id="RHEA:81717"/>
    </physiologicalReaction>
</comment>
<comment type="catalytic activity">
    <reaction evidence="6">
        <text>itaconate + succinyl-CoA = itaconyl-CoA + succinate</text>
        <dbReference type="Rhea" id="RHEA:38283"/>
        <dbReference type="ChEBI" id="CHEBI:17240"/>
        <dbReference type="ChEBI" id="CHEBI:30031"/>
        <dbReference type="ChEBI" id="CHEBI:57292"/>
        <dbReference type="ChEBI" id="CHEBI:57381"/>
    </reaction>
    <physiologicalReaction direction="left-to-right" evidence="14">
        <dbReference type="Rhea" id="RHEA:38284"/>
    </physiologicalReaction>
    <physiologicalReaction direction="right-to-left" evidence="13">
        <dbReference type="Rhea" id="RHEA:38285"/>
    </physiologicalReaction>
</comment>
<comment type="activity regulation">
    <text evidence="7">Inhibited by valsartan and losartan carboxylate.</text>
</comment>
<comment type="subcellular location">
    <subcellularLocation>
        <location evidence="5 6">Mitochondrion</location>
    </subcellularLocation>
</comment>
<comment type="alternative products">
    <event type="alternative splicing"/>
    <isoform>
        <id>Q9HAC7-1</id>
        <name>1</name>
        <sequence type="displayed"/>
    </isoform>
    <isoform>
        <id>Q9HAC7-2</id>
        <name>2</name>
        <sequence type="described" ref="VSP_014721 VSP_014722"/>
    </isoform>
    <isoform>
        <id>Q9HAC7-3</id>
        <name>3</name>
        <sequence type="described" ref="VSP_014722"/>
    </isoform>
    <isoform>
        <id>Q9HAC7-4</id>
        <name>4</name>
        <sequence type="described" ref="VSP_043291"/>
    </isoform>
</comment>
<comment type="tissue specificity">
    <text evidence="3">Highly expressed in kidney. Intermediate expression in liver, skeletal muscle and pancreas. Little to no expression detected in other tissues examined.</text>
</comment>
<comment type="disease" evidence="4 5">
    <disease id="DI-00516">
        <name>Glutaric aciduria 3</name>
        <acronym>GA3</acronym>
        <description>An autosomal recessive metabolic condition characterized by urinary excretion of abnormal quantities of glutaric acid, in the presence of normal 3-hydroxyglutarate, glutarylcarnitine and glutarylglycine urinary levels. Affected individuals show no consistent clinical phenotype and many are asymptomatic.</description>
        <dbReference type="MIM" id="231690"/>
    </disease>
    <text>The disease is caused by variants affecting the gene represented in this entry.</text>
</comment>
<comment type="similarity">
    <text evidence="12">Belongs to the CoA-transferase III family.</text>
</comment>
<comment type="sequence caution" evidence="12">
    <conflict type="erroneous initiation">
        <sequence resource="EMBL-CDS" id="AAH98117"/>
    </conflict>
    <text>Extended N-terminus.</text>
</comment>
<comment type="sequence caution" evidence="12">
    <conflict type="erroneous initiation">
        <sequence resource="EMBL-CDS" id="AAH98261"/>
    </conflict>
    <text>Extended N-terminus.</text>
</comment>
<comment type="sequence caution" evidence="12">
    <conflict type="erroneous initiation">
        <sequence resource="EMBL-CDS" id="AAH98310"/>
    </conflict>
    <text>Extended N-terminus.</text>
</comment>
<comment type="sequence caution" evidence="12">
    <conflict type="erroneous initiation">
        <sequence resource="EMBL-CDS" id="AAH98318"/>
    </conflict>
    <text>Extended N-terminus.</text>
</comment>
<comment type="sequence caution" evidence="12">
    <conflict type="erroneous initiation">
        <sequence resource="EMBL-CDS" id="BAB13922"/>
    </conflict>
    <text>Extended N-terminus.</text>
</comment>
<comment type="sequence caution" evidence="12">
    <conflict type="erroneous initiation">
        <sequence resource="EMBL-CDS" id="BAG61185"/>
    </conflict>
    <text>Extended N-terminus.</text>
</comment>
<reference key="1">
    <citation type="journal article" date="2004" name="Nat. Genet.">
        <title>Complete sequencing and characterization of 21,243 full-length human cDNAs.</title>
        <authorList>
            <person name="Ota T."/>
            <person name="Suzuki Y."/>
            <person name="Nishikawa T."/>
            <person name="Otsuki T."/>
            <person name="Sugiyama T."/>
            <person name="Irie R."/>
            <person name="Wakamatsu A."/>
            <person name="Hayashi K."/>
            <person name="Sato H."/>
            <person name="Nagai K."/>
            <person name="Kimura K."/>
            <person name="Makita H."/>
            <person name="Sekine M."/>
            <person name="Obayashi M."/>
            <person name="Nishi T."/>
            <person name="Shibahara T."/>
            <person name="Tanaka T."/>
            <person name="Ishii S."/>
            <person name="Yamamoto J."/>
            <person name="Saito K."/>
            <person name="Kawai Y."/>
            <person name="Isono Y."/>
            <person name="Nakamura Y."/>
            <person name="Nagahari K."/>
            <person name="Murakami K."/>
            <person name="Yasuda T."/>
            <person name="Iwayanagi T."/>
            <person name="Wagatsuma M."/>
            <person name="Shiratori A."/>
            <person name="Sudo H."/>
            <person name="Hosoiri T."/>
            <person name="Kaku Y."/>
            <person name="Kodaira H."/>
            <person name="Kondo H."/>
            <person name="Sugawara M."/>
            <person name="Takahashi M."/>
            <person name="Kanda K."/>
            <person name="Yokoi T."/>
            <person name="Furuya T."/>
            <person name="Kikkawa E."/>
            <person name="Omura Y."/>
            <person name="Abe K."/>
            <person name="Kamihara K."/>
            <person name="Katsuta N."/>
            <person name="Sato K."/>
            <person name="Tanikawa M."/>
            <person name="Yamazaki M."/>
            <person name="Ninomiya K."/>
            <person name="Ishibashi T."/>
            <person name="Yamashita H."/>
            <person name="Murakawa K."/>
            <person name="Fujimori K."/>
            <person name="Tanai H."/>
            <person name="Kimata M."/>
            <person name="Watanabe M."/>
            <person name="Hiraoka S."/>
            <person name="Chiba Y."/>
            <person name="Ishida S."/>
            <person name="Ono Y."/>
            <person name="Takiguchi S."/>
            <person name="Watanabe S."/>
            <person name="Yosida M."/>
            <person name="Hotuta T."/>
            <person name="Kusano J."/>
            <person name="Kanehori K."/>
            <person name="Takahashi-Fujii A."/>
            <person name="Hara H."/>
            <person name="Tanase T.-O."/>
            <person name="Nomura Y."/>
            <person name="Togiya S."/>
            <person name="Komai F."/>
            <person name="Hara R."/>
            <person name="Takeuchi K."/>
            <person name="Arita M."/>
            <person name="Imose N."/>
            <person name="Musashino K."/>
            <person name="Yuuki H."/>
            <person name="Oshima A."/>
            <person name="Sasaki N."/>
            <person name="Aotsuka S."/>
            <person name="Yoshikawa Y."/>
            <person name="Matsunawa H."/>
            <person name="Ichihara T."/>
            <person name="Shiohata N."/>
            <person name="Sano S."/>
            <person name="Moriya S."/>
            <person name="Momiyama H."/>
            <person name="Satoh N."/>
            <person name="Takami S."/>
            <person name="Terashima Y."/>
            <person name="Suzuki O."/>
            <person name="Nakagawa S."/>
            <person name="Senoh A."/>
            <person name="Mizoguchi H."/>
            <person name="Goto Y."/>
            <person name="Shimizu F."/>
            <person name="Wakebe H."/>
            <person name="Hishigaki H."/>
            <person name="Watanabe T."/>
            <person name="Sugiyama A."/>
            <person name="Takemoto M."/>
            <person name="Kawakami B."/>
            <person name="Yamazaki M."/>
            <person name="Watanabe K."/>
            <person name="Kumagai A."/>
            <person name="Itakura S."/>
            <person name="Fukuzumi Y."/>
            <person name="Fujimori Y."/>
            <person name="Komiyama M."/>
            <person name="Tashiro H."/>
            <person name="Tanigami A."/>
            <person name="Fujiwara T."/>
            <person name="Ono T."/>
            <person name="Yamada K."/>
            <person name="Fujii Y."/>
            <person name="Ozaki K."/>
            <person name="Hirao M."/>
            <person name="Ohmori Y."/>
            <person name="Kawabata A."/>
            <person name="Hikiji T."/>
            <person name="Kobatake N."/>
            <person name="Inagaki H."/>
            <person name="Ikema Y."/>
            <person name="Okamoto S."/>
            <person name="Okitani R."/>
            <person name="Kawakami T."/>
            <person name="Noguchi S."/>
            <person name="Itoh T."/>
            <person name="Shigeta K."/>
            <person name="Senba T."/>
            <person name="Matsumura K."/>
            <person name="Nakajima Y."/>
            <person name="Mizuno T."/>
            <person name="Morinaga M."/>
            <person name="Sasaki M."/>
            <person name="Togashi T."/>
            <person name="Oyama M."/>
            <person name="Hata H."/>
            <person name="Watanabe M."/>
            <person name="Komatsu T."/>
            <person name="Mizushima-Sugano J."/>
            <person name="Satoh T."/>
            <person name="Shirai Y."/>
            <person name="Takahashi Y."/>
            <person name="Nakagawa K."/>
            <person name="Okumura K."/>
            <person name="Nagase T."/>
            <person name="Nomura N."/>
            <person name="Kikuchi H."/>
            <person name="Masuho Y."/>
            <person name="Yamashita R."/>
            <person name="Nakai K."/>
            <person name="Yada T."/>
            <person name="Nakamura Y."/>
            <person name="Ohara O."/>
            <person name="Isogai T."/>
            <person name="Sugano S."/>
        </authorList>
    </citation>
    <scope>NUCLEOTIDE SEQUENCE [LARGE SCALE MRNA] (ISOFORMS 1 AND 2)</scope>
</reference>
<reference key="2">
    <citation type="journal article" date="2009" name="DNA Res.">
        <title>Identification and functional analyses of 11,769 full-length human cDNAs focused on alternative splicing.</title>
        <authorList>
            <person name="Wakamatsu A."/>
            <person name="Kimura K."/>
            <person name="Yamamoto J."/>
            <person name="Nishikawa T."/>
            <person name="Nomura N."/>
            <person name="Sugano S."/>
            <person name="Isogai T."/>
        </authorList>
    </citation>
    <scope>NUCLEOTIDE SEQUENCE [LARGE SCALE MRNA] (ISOFORM 1)</scope>
</reference>
<reference key="3">
    <citation type="journal article" date="2003" name="Nature">
        <title>The DNA sequence of human chromosome 7.</title>
        <authorList>
            <person name="Hillier L.W."/>
            <person name="Fulton R.S."/>
            <person name="Fulton L.A."/>
            <person name="Graves T.A."/>
            <person name="Pepin K.H."/>
            <person name="Wagner-McPherson C."/>
            <person name="Layman D."/>
            <person name="Maas J."/>
            <person name="Jaeger S."/>
            <person name="Walker R."/>
            <person name="Wylie K."/>
            <person name="Sekhon M."/>
            <person name="Becker M.C."/>
            <person name="O'Laughlin M.D."/>
            <person name="Schaller M.E."/>
            <person name="Fewell G.A."/>
            <person name="Delehaunty K.D."/>
            <person name="Miner T.L."/>
            <person name="Nash W.E."/>
            <person name="Cordes M."/>
            <person name="Du H."/>
            <person name="Sun H."/>
            <person name="Edwards J."/>
            <person name="Bradshaw-Cordum H."/>
            <person name="Ali J."/>
            <person name="Andrews S."/>
            <person name="Isak A."/>
            <person name="Vanbrunt A."/>
            <person name="Nguyen C."/>
            <person name="Du F."/>
            <person name="Lamar B."/>
            <person name="Courtney L."/>
            <person name="Kalicki J."/>
            <person name="Ozersky P."/>
            <person name="Bielicki L."/>
            <person name="Scott K."/>
            <person name="Holmes A."/>
            <person name="Harkins R."/>
            <person name="Harris A."/>
            <person name="Strong C.M."/>
            <person name="Hou S."/>
            <person name="Tomlinson C."/>
            <person name="Dauphin-Kohlberg S."/>
            <person name="Kozlowicz-Reilly A."/>
            <person name="Leonard S."/>
            <person name="Rohlfing T."/>
            <person name="Rock S.M."/>
            <person name="Tin-Wollam A.-M."/>
            <person name="Abbott A."/>
            <person name="Minx P."/>
            <person name="Maupin R."/>
            <person name="Strowmatt C."/>
            <person name="Latreille P."/>
            <person name="Miller N."/>
            <person name="Johnson D."/>
            <person name="Murray J."/>
            <person name="Woessner J.P."/>
            <person name="Wendl M.C."/>
            <person name="Yang S.-P."/>
            <person name="Schultz B.R."/>
            <person name="Wallis J.W."/>
            <person name="Spieth J."/>
            <person name="Bieri T.A."/>
            <person name="Nelson J.O."/>
            <person name="Berkowicz N."/>
            <person name="Wohldmann P.E."/>
            <person name="Cook L.L."/>
            <person name="Hickenbotham M.T."/>
            <person name="Eldred J."/>
            <person name="Williams D."/>
            <person name="Bedell J.A."/>
            <person name="Mardis E.R."/>
            <person name="Clifton S.W."/>
            <person name="Chissoe S.L."/>
            <person name="Marra M.A."/>
            <person name="Raymond C."/>
            <person name="Haugen E."/>
            <person name="Gillett W."/>
            <person name="Zhou Y."/>
            <person name="James R."/>
            <person name="Phelps K."/>
            <person name="Iadanoto S."/>
            <person name="Bubb K."/>
            <person name="Simms E."/>
            <person name="Levy R."/>
            <person name="Clendenning J."/>
            <person name="Kaul R."/>
            <person name="Kent W.J."/>
            <person name="Furey T.S."/>
            <person name="Baertsch R.A."/>
            <person name="Brent M.R."/>
            <person name="Keibler E."/>
            <person name="Flicek P."/>
            <person name="Bork P."/>
            <person name="Suyama M."/>
            <person name="Bailey J.A."/>
            <person name="Portnoy M.E."/>
            <person name="Torrents D."/>
            <person name="Chinwalla A.T."/>
            <person name="Gish W.R."/>
            <person name="Eddy S.R."/>
            <person name="McPherson J.D."/>
            <person name="Olson M.V."/>
            <person name="Eichler E.E."/>
            <person name="Green E.D."/>
            <person name="Waterston R.H."/>
            <person name="Wilson R.K."/>
        </authorList>
    </citation>
    <scope>NUCLEOTIDE SEQUENCE [LARGE SCALE GENOMIC DNA]</scope>
</reference>
<reference key="4">
    <citation type="journal article" date="2003" name="Science">
        <title>Human chromosome 7: DNA sequence and biology.</title>
        <authorList>
            <person name="Scherer S.W."/>
            <person name="Cheung J."/>
            <person name="MacDonald J.R."/>
            <person name="Osborne L.R."/>
            <person name="Nakabayashi K."/>
            <person name="Herbrick J.-A."/>
            <person name="Carson A.R."/>
            <person name="Parker-Katiraee L."/>
            <person name="Skaug J."/>
            <person name="Khaja R."/>
            <person name="Zhang J."/>
            <person name="Hudek A.K."/>
            <person name="Li M."/>
            <person name="Haddad M."/>
            <person name="Duggan G.E."/>
            <person name="Fernandez B.A."/>
            <person name="Kanematsu E."/>
            <person name="Gentles S."/>
            <person name="Christopoulos C.C."/>
            <person name="Choufani S."/>
            <person name="Kwasnicka D."/>
            <person name="Zheng X.H."/>
            <person name="Lai Z."/>
            <person name="Nusskern D.R."/>
            <person name="Zhang Q."/>
            <person name="Gu Z."/>
            <person name="Lu F."/>
            <person name="Zeesman S."/>
            <person name="Nowaczyk M.J."/>
            <person name="Teshima I."/>
            <person name="Chitayat D."/>
            <person name="Shuman C."/>
            <person name="Weksberg R."/>
            <person name="Zackai E.H."/>
            <person name="Grebe T.A."/>
            <person name="Cox S.R."/>
            <person name="Kirkpatrick S.J."/>
            <person name="Rahman N."/>
            <person name="Friedman J.M."/>
            <person name="Heng H.H.Q."/>
            <person name="Pelicci P.G."/>
            <person name="Lo-Coco F."/>
            <person name="Belloni E."/>
            <person name="Shaffer L.G."/>
            <person name="Pober B."/>
            <person name="Morton C.C."/>
            <person name="Gusella J.F."/>
            <person name="Bruns G.A.P."/>
            <person name="Korf B.R."/>
            <person name="Quade B.J."/>
            <person name="Ligon A.H."/>
            <person name="Ferguson H."/>
            <person name="Higgins A.W."/>
            <person name="Leach N.T."/>
            <person name="Herrick S.R."/>
            <person name="Lemyre E."/>
            <person name="Farra C.G."/>
            <person name="Kim H.-G."/>
            <person name="Summers A.M."/>
            <person name="Gripp K.W."/>
            <person name="Roberts W."/>
            <person name="Szatmari P."/>
            <person name="Winsor E.J.T."/>
            <person name="Grzeschik K.-H."/>
            <person name="Teebi A."/>
            <person name="Minassian B.A."/>
            <person name="Kere J."/>
            <person name="Armengol L."/>
            <person name="Pujana M.A."/>
            <person name="Estivill X."/>
            <person name="Wilson M.D."/>
            <person name="Koop B.F."/>
            <person name="Tosi S."/>
            <person name="Moore G.E."/>
            <person name="Boright A.P."/>
            <person name="Zlotorynski E."/>
            <person name="Kerem B."/>
            <person name="Kroisel P.M."/>
            <person name="Petek E."/>
            <person name="Oscier D.G."/>
            <person name="Mould S.J."/>
            <person name="Doehner H."/>
            <person name="Doehner K."/>
            <person name="Rommens J.M."/>
            <person name="Vincent J.B."/>
            <person name="Venter J.C."/>
            <person name="Li P.W."/>
            <person name="Mural R.J."/>
            <person name="Adams M.D."/>
            <person name="Tsui L.-C."/>
        </authorList>
    </citation>
    <scope>NUCLEOTIDE SEQUENCE [LARGE SCALE GENOMIC DNA]</scope>
</reference>
<reference key="5">
    <citation type="submission" date="2005-07" db="EMBL/GenBank/DDBJ databases">
        <authorList>
            <person name="Mural R.J."/>
            <person name="Istrail S."/>
            <person name="Sutton G.G."/>
            <person name="Florea L."/>
            <person name="Halpern A.L."/>
            <person name="Mobarry C.M."/>
            <person name="Lippert R."/>
            <person name="Walenz B."/>
            <person name="Shatkay H."/>
            <person name="Dew I."/>
            <person name="Miller J.R."/>
            <person name="Flanigan M.J."/>
            <person name="Edwards N.J."/>
            <person name="Bolanos R."/>
            <person name="Fasulo D."/>
            <person name="Halldorsson B.V."/>
            <person name="Hannenhalli S."/>
            <person name="Turner R."/>
            <person name="Yooseph S."/>
            <person name="Lu F."/>
            <person name="Nusskern D.R."/>
            <person name="Shue B.C."/>
            <person name="Zheng X.H."/>
            <person name="Zhong F."/>
            <person name="Delcher A.L."/>
            <person name="Huson D.H."/>
            <person name="Kravitz S.A."/>
            <person name="Mouchard L."/>
            <person name="Reinert K."/>
            <person name="Remington K.A."/>
            <person name="Clark A.G."/>
            <person name="Waterman M.S."/>
            <person name="Eichler E.E."/>
            <person name="Adams M.D."/>
            <person name="Hunkapiller M.W."/>
            <person name="Myers E.W."/>
            <person name="Venter J.C."/>
        </authorList>
    </citation>
    <scope>NUCLEOTIDE SEQUENCE [LARGE SCALE GENOMIC DNA]</scope>
</reference>
<reference key="6">
    <citation type="journal article" date="2002" name="Genomics">
        <title>Molecular genetic studies of human chromosome 7 in Russell-Silver syndrome.</title>
        <authorList>
            <person name="Nakabayashi K."/>
            <person name="Fernandez B.A."/>
            <person name="Teshima I."/>
            <person name="Shuman C."/>
            <person name="Proud V.K."/>
            <person name="Curry C.J."/>
            <person name="Chitayat D."/>
            <person name="Grebe T."/>
            <person name="Ming J."/>
            <person name="Oshimura M."/>
            <person name="Meguro M."/>
            <person name="Mitsuya K."/>
            <person name="Deb-Rinker P."/>
            <person name="Herbrick J.A."/>
            <person name="Weksberg R."/>
            <person name="Scherer S.W."/>
        </authorList>
    </citation>
    <scope>NUCLEOTIDE SEQUENCE [MRNA] OF 1-71</scope>
    <scope>TISSUE SPECIFICITY</scope>
</reference>
<reference key="7">
    <citation type="submission" date="1998-05" db="EMBL/GenBank/DDBJ databases">
        <title>Molecular cloning of a dermal papiila derived gene.</title>
        <authorList>
            <person name="Ikeda A."/>
            <person name="Yamashita M."/>
            <person name="Yoshimoto M."/>
        </authorList>
    </citation>
    <scope>NUCLEOTIDE SEQUENCE [MRNA] OF 35-438 (ISOFORM 1)</scope>
    <source>
        <tissue>Hair follicle dermal papilla</tissue>
    </source>
</reference>
<reference key="8">
    <citation type="journal article" date="2004" name="Genome Res.">
        <title>The status, quality, and expansion of the NIH full-length cDNA project: the Mammalian Gene Collection (MGC).</title>
        <authorList>
            <consortium name="The MGC Project Team"/>
        </authorList>
    </citation>
    <scope>NUCLEOTIDE SEQUENCE [LARGE SCALE MRNA] (ISOFORMS 1; 3 AND 4)</scope>
</reference>
<reference key="9">
    <citation type="journal article" date="2014" name="J. Inherit. Metab. Dis.">
        <title>C7orf10 encodes succinate-hydroxymethylglutarate CoA-transferase, the enzyme that converts glutarate to glutaryl-CoA.</title>
        <authorList>
            <person name="Marlaire S."/>
            <person name="Van Schaftingen E."/>
            <person name="Veiga-da-Cunha M."/>
        </authorList>
    </citation>
    <scope>FUNCTION</scope>
    <scope>CATALYTIC ACTIVITY</scope>
    <scope>SUBCELLULAR LOCATION</scope>
    <scope>CHARACTERIZATION OF VARIANT GA3 TRP-329</scope>
</reference>
<reference key="10">
    <citation type="journal article" date="2021" name="Blood Adv.">
        <title>The immunometabolite itaconate inhibits heme synthesis and remodels cellular metabolism in erythroid precursors.</title>
        <authorList>
            <person name="Marcero J.R."/>
            <person name="Cox J.E."/>
            <person name="Bergonia H.A."/>
            <person name="Medlock A.E."/>
            <person name="Phillips J.D."/>
            <person name="Dailey H.A."/>
        </authorList>
    </citation>
    <scope>FUNCTION</scope>
    <scope>CATALYTIC ACTIVITY</scope>
    <scope>SUBCELLULAR LOCATION</scope>
</reference>
<reference key="11">
    <citation type="journal article" date="2024" name="ACS Chem. Biol.">
        <title>Characterization, Structure, and Inhibition of the Human Succinyl-CoA:glutarate-CoA Transferase, a Putative Genetic Modifier of Glutaric Aciduria Type 1.</title>
        <authorList>
            <person name="Wu R."/>
            <person name="Khamrui S."/>
            <person name="Dodatko T."/>
            <person name="Leandro J."/>
            <person name="Sabovic A."/>
            <person name="Violante S."/>
            <person name="Cross J.R."/>
            <person name="Marsan E."/>
            <person name="Kumar K."/>
            <person name="DeVita R.J."/>
            <person name="Lazarus M.B."/>
            <person name="Houten S.M."/>
        </authorList>
    </citation>
    <scope>X-RAY CRYSTALLOGRAPHY (2.08 ANGSTROMS) OF 31-438</scope>
    <scope>FUNCTION</scope>
    <scope>CATALYTIC ACTIVITY</scope>
    <scope>ACTIVITY REGULATION</scope>
    <scope>MUTAGENESIS OF ASP-205</scope>
</reference>
<reference key="12">
    <citation type="journal article" date="2008" name="Am. J. Hum. Genet.">
        <title>Genetic mapping of glutaric aciduria, type 3, to chromosome 7 and identification of mutations in C7orf10.</title>
        <authorList>
            <person name="Sherman E.A."/>
            <person name="Strauss K.A."/>
            <person name="Tortorelli S."/>
            <person name="Bennett M.J."/>
            <person name="Knerr I."/>
            <person name="Morton D.H."/>
            <person name="Puffenberger E.G."/>
        </authorList>
    </citation>
    <scope>INVOLVEMENT IN GA3</scope>
    <scope>VARIANTS GA3 101-ARG--HIS-438 DEL; 172-ARG--HIS-438 DEL AND TRP-329</scope>
    <scope>FUNCTION</scope>
</reference>
<sequence length="438" mass="47708">MLATLARVAALRRTCLFSGRGGGRGLWTGRPQSDMNNIKPLEGVKILDLTRVLAGPFATMNLGDLGAEVIKVERPGAGDDTRTWGPPFVGTESTYYLSVNRNKKSIAVNIKDPKGVKIIKELAAVCDVFVENYVPGKLSAMGLGYEDIDEIAPHIIYCSITGYGQTGPISQRAGYDAVASAVSGLMHITGPENGDPVRPGVAMTDLATGLYAYGAIMAGLIQKYKTGKGLFIDCNLLSSQVACLSHIAANYLIGQKEAKRWGTAHGSIVPYQAFKTKDGYIVVGAGNNQQFATVCKILDLPELIDNSKYKTNHLRVHNRKELIKILSERFEEELTSKWLYLFEGSGVPYGPINNMKNVFAEPQVLHNGLVMEMEHPTVGKISVPGPAVRYSKFKMSEARPPPLLGQHTTHILKEVLRYDDRAIGELLSAGVVDQHETH</sequence>
<organism>
    <name type="scientific">Homo sapiens</name>
    <name type="common">Human</name>
    <dbReference type="NCBI Taxonomy" id="9606"/>
    <lineage>
        <taxon>Eukaryota</taxon>
        <taxon>Metazoa</taxon>
        <taxon>Chordata</taxon>
        <taxon>Craniata</taxon>
        <taxon>Vertebrata</taxon>
        <taxon>Euteleostomi</taxon>
        <taxon>Mammalia</taxon>
        <taxon>Eutheria</taxon>
        <taxon>Euarchontoglires</taxon>
        <taxon>Primates</taxon>
        <taxon>Haplorrhini</taxon>
        <taxon>Catarrhini</taxon>
        <taxon>Hominidae</taxon>
        <taxon>Homo</taxon>
    </lineage>
</organism>
<proteinExistence type="evidence at protein level"/>
<name>SUCHY_HUMAN</name>
<accession>Q9HAC7</accession>
<accession>A4D1W5</accession>
<accession>B4DJF0</accession>
<accession>B4DR73</accession>
<accession>Q4KMW4</accession>
<accession>Q4KMW8</accession>
<accession>Q4KMZ0</accession>
<accession>Q8TE00</accession>
<accession>Q8TEY1</accession>
<evidence type="ECO:0000250" key="1">
    <source>
        <dbReference type="UniProtKB" id="Q7TNE1"/>
    </source>
</evidence>
<evidence type="ECO:0000255" key="2"/>
<evidence type="ECO:0000269" key="3">
    <source>
    </source>
</evidence>
<evidence type="ECO:0000269" key="4">
    <source>
    </source>
</evidence>
<evidence type="ECO:0000269" key="5">
    <source>
    </source>
</evidence>
<evidence type="ECO:0000269" key="6">
    <source>
    </source>
</evidence>
<evidence type="ECO:0000269" key="7">
    <source>
    </source>
</evidence>
<evidence type="ECO:0000303" key="8">
    <source>
    </source>
</evidence>
<evidence type="ECO:0000303" key="9">
    <source>
    </source>
</evidence>
<evidence type="ECO:0000303" key="10">
    <source>
    </source>
</evidence>
<evidence type="ECO:0000303" key="11">
    <source>
    </source>
</evidence>
<evidence type="ECO:0000305" key="12"/>
<evidence type="ECO:0000305" key="13">
    <source>
    </source>
</evidence>
<evidence type="ECO:0000305" key="14">
    <source>
    </source>
</evidence>
<evidence type="ECO:0000312" key="15">
    <source>
        <dbReference type="HGNC" id="HGNC:16001"/>
    </source>
</evidence>
<evidence type="ECO:0007829" key="16">
    <source>
        <dbReference type="PDB" id="9BR6"/>
    </source>
</evidence>